<protein>
    <recommendedName>
        <fullName evidence="1">Uracil phosphoribosyltransferase</fullName>
        <ecNumber evidence="1">2.4.2.9</ecNumber>
    </recommendedName>
    <alternativeName>
        <fullName evidence="1">UMP pyrophosphorylase</fullName>
    </alternativeName>
    <alternativeName>
        <fullName evidence="1">UPRTase</fullName>
    </alternativeName>
</protein>
<reference key="1">
    <citation type="submission" date="2008-01" db="EMBL/GenBank/DDBJ databases">
        <title>Complete sequence of Thermoanaerobacter sp. X514.</title>
        <authorList>
            <consortium name="US DOE Joint Genome Institute"/>
            <person name="Copeland A."/>
            <person name="Lucas S."/>
            <person name="Lapidus A."/>
            <person name="Barry K."/>
            <person name="Glavina del Rio T."/>
            <person name="Dalin E."/>
            <person name="Tice H."/>
            <person name="Pitluck S."/>
            <person name="Bruce D."/>
            <person name="Goodwin L."/>
            <person name="Saunders E."/>
            <person name="Brettin T."/>
            <person name="Detter J.C."/>
            <person name="Han C."/>
            <person name="Schmutz J."/>
            <person name="Larimer F."/>
            <person name="Land M."/>
            <person name="Hauser L."/>
            <person name="Kyrpides N."/>
            <person name="Kim E."/>
            <person name="Hemme C."/>
            <person name="Fields M.W."/>
            <person name="He Z."/>
            <person name="Zhou J."/>
            <person name="Richardson P."/>
        </authorList>
    </citation>
    <scope>NUCLEOTIDE SEQUENCE [LARGE SCALE GENOMIC DNA]</scope>
    <source>
        <strain>X514</strain>
    </source>
</reference>
<feature type="chain" id="PRO_1000139173" description="Uracil phosphoribosyltransferase">
    <location>
        <begin position="1"/>
        <end position="210"/>
    </location>
</feature>
<feature type="binding site" evidence="1">
    <location>
        <position position="80"/>
    </location>
    <ligand>
        <name>5-phospho-alpha-D-ribose 1-diphosphate</name>
        <dbReference type="ChEBI" id="CHEBI:58017"/>
    </ligand>
</feature>
<feature type="binding site" evidence="1">
    <location>
        <position position="105"/>
    </location>
    <ligand>
        <name>5-phospho-alpha-D-ribose 1-diphosphate</name>
        <dbReference type="ChEBI" id="CHEBI:58017"/>
    </ligand>
</feature>
<feature type="binding site" evidence="1">
    <location>
        <begin position="132"/>
        <end position="140"/>
    </location>
    <ligand>
        <name>5-phospho-alpha-D-ribose 1-diphosphate</name>
        <dbReference type="ChEBI" id="CHEBI:58017"/>
    </ligand>
</feature>
<feature type="binding site" evidence="1">
    <location>
        <position position="195"/>
    </location>
    <ligand>
        <name>uracil</name>
        <dbReference type="ChEBI" id="CHEBI:17568"/>
    </ligand>
</feature>
<feature type="binding site" evidence="1">
    <location>
        <begin position="200"/>
        <end position="202"/>
    </location>
    <ligand>
        <name>uracil</name>
        <dbReference type="ChEBI" id="CHEBI:17568"/>
    </ligand>
</feature>
<feature type="binding site" evidence="1">
    <location>
        <position position="201"/>
    </location>
    <ligand>
        <name>5-phospho-alpha-D-ribose 1-diphosphate</name>
        <dbReference type="ChEBI" id="CHEBI:58017"/>
    </ligand>
</feature>
<keyword id="KW-0021">Allosteric enzyme</keyword>
<keyword id="KW-0328">Glycosyltransferase</keyword>
<keyword id="KW-0342">GTP-binding</keyword>
<keyword id="KW-0460">Magnesium</keyword>
<keyword id="KW-0547">Nucleotide-binding</keyword>
<keyword id="KW-0808">Transferase</keyword>
<evidence type="ECO:0000255" key="1">
    <source>
        <dbReference type="HAMAP-Rule" id="MF_01218"/>
    </source>
</evidence>
<proteinExistence type="inferred from homology"/>
<comment type="function">
    <text evidence="1">Catalyzes the conversion of uracil and 5-phospho-alpha-D-ribose 1-diphosphate (PRPP) to UMP and diphosphate.</text>
</comment>
<comment type="catalytic activity">
    <reaction evidence="1">
        <text>UMP + diphosphate = 5-phospho-alpha-D-ribose 1-diphosphate + uracil</text>
        <dbReference type="Rhea" id="RHEA:13017"/>
        <dbReference type="ChEBI" id="CHEBI:17568"/>
        <dbReference type="ChEBI" id="CHEBI:33019"/>
        <dbReference type="ChEBI" id="CHEBI:57865"/>
        <dbReference type="ChEBI" id="CHEBI:58017"/>
        <dbReference type="EC" id="2.4.2.9"/>
    </reaction>
</comment>
<comment type="cofactor">
    <cofactor evidence="1">
        <name>Mg(2+)</name>
        <dbReference type="ChEBI" id="CHEBI:18420"/>
    </cofactor>
    <text evidence="1">Binds 1 Mg(2+) ion per subunit. The magnesium is bound as Mg-PRPP.</text>
</comment>
<comment type="activity regulation">
    <text evidence="1">Allosterically activated by GTP.</text>
</comment>
<comment type="pathway">
    <text evidence="1">Pyrimidine metabolism; UMP biosynthesis via salvage pathway; UMP from uracil: step 1/1.</text>
</comment>
<comment type="similarity">
    <text evidence="1">Belongs to the UPRTase family.</text>
</comment>
<dbReference type="EC" id="2.4.2.9" evidence="1"/>
<dbReference type="EMBL" id="CP000923">
    <property type="protein sequence ID" value="ABY91421.1"/>
    <property type="molecule type" value="Genomic_DNA"/>
</dbReference>
<dbReference type="RefSeq" id="WP_003867307.1">
    <property type="nucleotide sequence ID" value="NC_010320.1"/>
</dbReference>
<dbReference type="SMR" id="B0K1G2"/>
<dbReference type="KEGG" id="tex:Teth514_0099"/>
<dbReference type="HOGENOM" id="CLU_067096_2_2_9"/>
<dbReference type="UniPathway" id="UPA00574">
    <property type="reaction ID" value="UER00636"/>
</dbReference>
<dbReference type="Proteomes" id="UP000002155">
    <property type="component" value="Chromosome"/>
</dbReference>
<dbReference type="GO" id="GO:0005525">
    <property type="term" value="F:GTP binding"/>
    <property type="evidence" value="ECO:0007669"/>
    <property type="project" value="UniProtKB-KW"/>
</dbReference>
<dbReference type="GO" id="GO:0000287">
    <property type="term" value="F:magnesium ion binding"/>
    <property type="evidence" value="ECO:0007669"/>
    <property type="project" value="UniProtKB-UniRule"/>
</dbReference>
<dbReference type="GO" id="GO:0004845">
    <property type="term" value="F:uracil phosphoribosyltransferase activity"/>
    <property type="evidence" value="ECO:0007669"/>
    <property type="project" value="UniProtKB-UniRule"/>
</dbReference>
<dbReference type="GO" id="GO:0044206">
    <property type="term" value="P:UMP salvage"/>
    <property type="evidence" value="ECO:0007669"/>
    <property type="project" value="UniProtKB-UniRule"/>
</dbReference>
<dbReference type="GO" id="GO:0006223">
    <property type="term" value="P:uracil salvage"/>
    <property type="evidence" value="ECO:0007669"/>
    <property type="project" value="InterPro"/>
</dbReference>
<dbReference type="CDD" id="cd06223">
    <property type="entry name" value="PRTases_typeI"/>
    <property type="match status" value="1"/>
</dbReference>
<dbReference type="FunFam" id="3.40.50.2020:FF:000003">
    <property type="entry name" value="Uracil phosphoribosyltransferase"/>
    <property type="match status" value="1"/>
</dbReference>
<dbReference type="Gene3D" id="3.40.50.2020">
    <property type="match status" value="1"/>
</dbReference>
<dbReference type="HAMAP" id="MF_01218_B">
    <property type="entry name" value="Upp_B"/>
    <property type="match status" value="1"/>
</dbReference>
<dbReference type="InterPro" id="IPR000836">
    <property type="entry name" value="PRibTrfase_dom"/>
</dbReference>
<dbReference type="InterPro" id="IPR029057">
    <property type="entry name" value="PRTase-like"/>
</dbReference>
<dbReference type="InterPro" id="IPR034332">
    <property type="entry name" value="Upp_B"/>
</dbReference>
<dbReference type="InterPro" id="IPR050054">
    <property type="entry name" value="UPRTase/APRTase"/>
</dbReference>
<dbReference type="InterPro" id="IPR005765">
    <property type="entry name" value="Ura_phspho_trans"/>
</dbReference>
<dbReference type="NCBIfam" id="NF001097">
    <property type="entry name" value="PRK00129.1"/>
    <property type="match status" value="1"/>
</dbReference>
<dbReference type="NCBIfam" id="TIGR01091">
    <property type="entry name" value="upp"/>
    <property type="match status" value="1"/>
</dbReference>
<dbReference type="PANTHER" id="PTHR32315">
    <property type="entry name" value="ADENINE PHOSPHORIBOSYLTRANSFERASE"/>
    <property type="match status" value="1"/>
</dbReference>
<dbReference type="PANTHER" id="PTHR32315:SF4">
    <property type="entry name" value="URACIL PHOSPHORIBOSYLTRANSFERASE, CHLOROPLASTIC"/>
    <property type="match status" value="1"/>
</dbReference>
<dbReference type="Pfam" id="PF14681">
    <property type="entry name" value="UPRTase"/>
    <property type="match status" value="1"/>
</dbReference>
<dbReference type="SUPFAM" id="SSF53271">
    <property type="entry name" value="PRTase-like"/>
    <property type="match status" value="1"/>
</dbReference>
<gene>
    <name evidence="1" type="primary">upp</name>
    <name type="ordered locus">Teth514_0099</name>
</gene>
<sequence>MYKNVFVIDHPLIQHKISLIRDENTGSKEFRELVEEIAMLMAYEVTRDLPLEEIEVKTPVAVAKTKVIAGKKLGIIPILRAGLGMVDGMLKLIPAAKVGHIGIYRDPETLKPVEYYCKLPSDIAERDLIVVDPMLATGGSACAAIHFLKERGAQNIKLVNLIAAPEGIEAVHRDHPEVPIYVASIDQGLNEHGYIVPGLGDAGDRLFGTK</sequence>
<organism>
    <name type="scientific">Thermoanaerobacter sp. (strain X514)</name>
    <dbReference type="NCBI Taxonomy" id="399726"/>
    <lineage>
        <taxon>Bacteria</taxon>
        <taxon>Bacillati</taxon>
        <taxon>Bacillota</taxon>
        <taxon>Clostridia</taxon>
        <taxon>Thermoanaerobacterales</taxon>
        <taxon>Thermoanaerobacteraceae</taxon>
        <taxon>Thermoanaerobacter</taxon>
    </lineage>
</organism>
<accession>B0K1G2</accession>
<name>UPP_THEPX</name>